<organism>
    <name type="scientific">Neisseria gonorrhoeae</name>
    <dbReference type="NCBI Taxonomy" id="485"/>
    <lineage>
        <taxon>Bacteria</taxon>
        <taxon>Pseudomonadati</taxon>
        <taxon>Pseudomonadota</taxon>
        <taxon>Betaproteobacteria</taxon>
        <taxon>Neisseriales</taxon>
        <taxon>Neisseriaceae</taxon>
        <taxon>Neisseria</taxon>
    </lineage>
</organism>
<gene>
    <name type="primary">exbB</name>
</gene>
<keyword id="KW-0997">Cell inner membrane</keyword>
<keyword id="KW-1003">Cell membrane</keyword>
<keyword id="KW-0472">Membrane</keyword>
<keyword id="KW-0653">Protein transport</keyword>
<keyword id="KW-0812">Transmembrane</keyword>
<keyword id="KW-1133">Transmembrane helix</keyword>
<keyword id="KW-0813">Transport</keyword>
<protein>
    <recommendedName>
        <fullName>Biopolymer transport protein ExbB</fullName>
    </recommendedName>
</protein>
<dbReference type="EMBL" id="U79563">
    <property type="protein sequence ID" value="AAC45287.1"/>
    <property type="molecule type" value="Genomic_DNA"/>
</dbReference>
<dbReference type="RefSeq" id="WP_003695658.1">
    <property type="nucleotide sequence ID" value="NZ_WHPL01000002.1"/>
</dbReference>
<dbReference type="SMR" id="O06433"/>
<dbReference type="GeneID" id="66753584"/>
<dbReference type="GO" id="GO:0005886">
    <property type="term" value="C:plasma membrane"/>
    <property type="evidence" value="ECO:0007669"/>
    <property type="project" value="UniProtKB-SubCell"/>
</dbReference>
<dbReference type="GO" id="GO:0017038">
    <property type="term" value="P:protein import"/>
    <property type="evidence" value="ECO:0007669"/>
    <property type="project" value="TreeGrafter"/>
</dbReference>
<dbReference type="InterPro" id="IPR050790">
    <property type="entry name" value="ExbB/TolQ_transport"/>
</dbReference>
<dbReference type="InterPro" id="IPR002898">
    <property type="entry name" value="MotA_ExbB_proton_chnl"/>
</dbReference>
<dbReference type="PANTHER" id="PTHR30625:SF14">
    <property type="entry name" value="BIOPOLYMER TRANSPORT PROTEIN EXBB"/>
    <property type="match status" value="1"/>
</dbReference>
<dbReference type="PANTHER" id="PTHR30625">
    <property type="entry name" value="PROTEIN TOLQ"/>
    <property type="match status" value="1"/>
</dbReference>
<dbReference type="Pfam" id="PF01618">
    <property type="entry name" value="MotA_ExbB"/>
    <property type="match status" value="1"/>
</dbReference>
<proteinExistence type="inferred from homology"/>
<accession>O06433</accession>
<evidence type="ECO:0000250" key="1"/>
<evidence type="ECO:0000255" key="2"/>
<evidence type="ECO:0000305" key="3"/>
<sequence>MNLKLVFESGDPVLIGVFVLMLLMSTVTWCLVVLRCIKLYRARKGNAAVKRHMRDTLSLNDAVEKVRAVDAPLSKLAQEALQSYRNYRRNEASELAQALPLNEYLVIQIRNSMAQIMRRFDYGMTALASIGATAPFIGLFGTVWGIYHALINIGQSGQMSIAAVAGPIGEALVATAAGLFVAIPAVLAYNFLNRGTKILTQDLDAMAHDLHVRLLNQKDS</sequence>
<feature type="chain" id="PRO_0000145805" description="Biopolymer transport protein ExbB">
    <location>
        <begin position="1"/>
        <end position="220"/>
    </location>
</feature>
<feature type="transmembrane region" description="Helical" evidence="2">
    <location>
        <begin position="13"/>
        <end position="33"/>
    </location>
</feature>
<feature type="transmembrane region" description="Helical" evidence="2">
    <location>
        <begin position="126"/>
        <end position="146"/>
    </location>
</feature>
<feature type="transmembrane region" description="Helical" evidence="2">
    <location>
        <begin position="168"/>
        <end position="188"/>
    </location>
</feature>
<comment type="function">
    <text evidence="1">Involved in the TonB-dependent energy-dependent transport of various receptor-bound substrates. Protects ExbD from proteolytic degradation and functionally stabilizes TonB (By similarity).</text>
</comment>
<comment type="subunit">
    <text evidence="1">The accessory proteins ExbB and ExbD seem to form a complex with TonB.</text>
</comment>
<comment type="subcellular location">
    <subcellularLocation>
        <location>Cell inner membrane</location>
        <topology>Multi-pass membrane protein</topology>
    </subcellularLocation>
</comment>
<comment type="similarity">
    <text evidence="3">Belongs to the ExbB/TolQ family.</text>
</comment>
<name>EXBB_NEIGO</name>
<reference key="1">
    <citation type="journal article" date="1997" name="Mol. Microbiol.">
        <title>Cloning and functional characterization of Neisseria gonorrhoeae tonB, exbB and exbD genes.</title>
        <authorList>
            <person name="Biswas G.D."/>
            <person name="Anderson J.E."/>
            <person name="Sparling P.F."/>
        </authorList>
    </citation>
    <scope>NUCLEOTIDE SEQUENCE [GENOMIC DNA]</scope>
    <source>
        <strain>FA19</strain>
    </source>
</reference>